<sequence length="473" mass="54237">MLRNRLFKTPHQTGFQWRLGAPATGITIRNQPIRSYSGLRGNFLIDKRLSPVKFNKYSPSDIVFYNIGSSRLYSTETPTPSKVKEAPKQVAAEETKPTTVVKKPSIWQRVKGGVLHFWDGTKLLGVEIKISSKLVYKMAVGYELTRRESRQLTRTLKDIGRLVPFSVFVVVPFAELLLPIAVKLFPNLLPSTFEDAKDKEAKKAQLRKTRNEVSNMLRSTLKSGKFTFSNETRESKEFRDFFQKVRTSGQSPSREELIEVCKYFKDDITLDNLSRAQLVAMCRYMNLNAFGTDPLLRYNIRHRMRQIRRDDRAIYIEGINSLSIPELFNACNSRGIRTQGLSPAKLKEELSVWLDMRIKHGIPSVILMLSNAFSYGYNEGTYDSRWDALQDTLASIPDELYHETVVDMPTKQVSNKERLEILREQEELIEEEAEHVAEHPDLAKKQTEENKATSKPAVSAKSPESNIPKNERK</sequence>
<protein>
    <recommendedName>
        <fullName>LETM1 domain-containing protein mdm28, mitochondrial</fullName>
    </recommendedName>
</protein>
<proteinExistence type="evidence at transcript level"/>
<reference key="1">
    <citation type="journal article" date="2002" name="Nature">
        <title>The genome sequence of Schizosaccharomyces pombe.</title>
        <authorList>
            <person name="Wood V."/>
            <person name="Gwilliam R."/>
            <person name="Rajandream M.A."/>
            <person name="Lyne M.H."/>
            <person name="Lyne R."/>
            <person name="Stewart A."/>
            <person name="Sgouros J.G."/>
            <person name="Peat N."/>
            <person name="Hayles J."/>
            <person name="Baker S.G."/>
            <person name="Basham D."/>
            <person name="Bowman S."/>
            <person name="Brooks K."/>
            <person name="Brown D."/>
            <person name="Brown S."/>
            <person name="Chillingworth T."/>
            <person name="Churcher C.M."/>
            <person name="Collins M."/>
            <person name="Connor R."/>
            <person name="Cronin A."/>
            <person name="Davis P."/>
            <person name="Feltwell T."/>
            <person name="Fraser A."/>
            <person name="Gentles S."/>
            <person name="Goble A."/>
            <person name="Hamlin N."/>
            <person name="Harris D.E."/>
            <person name="Hidalgo J."/>
            <person name="Hodgson G."/>
            <person name="Holroyd S."/>
            <person name="Hornsby T."/>
            <person name="Howarth S."/>
            <person name="Huckle E.J."/>
            <person name="Hunt S."/>
            <person name="Jagels K."/>
            <person name="James K.D."/>
            <person name="Jones L."/>
            <person name="Jones M."/>
            <person name="Leather S."/>
            <person name="McDonald S."/>
            <person name="McLean J."/>
            <person name="Mooney P."/>
            <person name="Moule S."/>
            <person name="Mungall K.L."/>
            <person name="Murphy L.D."/>
            <person name="Niblett D."/>
            <person name="Odell C."/>
            <person name="Oliver K."/>
            <person name="O'Neil S."/>
            <person name="Pearson D."/>
            <person name="Quail M.A."/>
            <person name="Rabbinowitsch E."/>
            <person name="Rutherford K.M."/>
            <person name="Rutter S."/>
            <person name="Saunders D."/>
            <person name="Seeger K."/>
            <person name="Sharp S."/>
            <person name="Skelton J."/>
            <person name="Simmonds M.N."/>
            <person name="Squares R."/>
            <person name="Squares S."/>
            <person name="Stevens K."/>
            <person name="Taylor K."/>
            <person name="Taylor R.G."/>
            <person name="Tivey A."/>
            <person name="Walsh S.V."/>
            <person name="Warren T."/>
            <person name="Whitehead S."/>
            <person name="Woodward J.R."/>
            <person name="Volckaert G."/>
            <person name="Aert R."/>
            <person name="Robben J."/>
            <person name="Grymonprez B."/>
            <person name="Weltjens I."/>
            <person name="Vanstreels E."/>
            <person name="Rieger M."/>
            <person name="Schaefer M."/>
            <person name="Mueller-Auer S."/>
            <person name="Gabel C."/>
            <person name="Fuchs M."/>
            <person name="Duesterhoeft A."/>
            <person name="Fritzc C."/>
            <person name="Holzer E."/>
            <person name="Moestl D."/>
            <person name="Hilbert H."/>
            <person name="Borzym K."/>
            <person name="Langer I."/>
            <person name="Beck A."/>
            <person name="Lehrach H."/>
            <person name="Reinhardt R."/>
            <person name="Pohl T.M."/>
            <person name="Eger P."/>
            <person name="Zimmermann W."/>
            <person name="Wedler H."/>
            <person name="Wambutt R."/>
            <person name="Purnelle B."/>
            <person name="Goffeau A."/>
            <person name="Cadieu E."/>
            <person name="Dreano S."/>
            <person name="Gloux S."/>
            <person name="Lelaure V."/>
            <person name="Mottier S."/>
            <person name="Galibert F."/>
            <person name="Aves S.J."/>
            <person name="Xiang Z."/>
            <person name="Hunt C."/>
            <person name="Moore K."/>
            <person name="Hurst S.M."/>
            <person name="Lucas M."/>
            <person name="Rochet M."/>
            <person name="Gaillardin C."/>
            <person name="Tallada V.A."/>
            <person name="Garzon A."/>
            <person name="Thode G."/>
            <person name="Daga R.R."/>
            <person name="Cruzado L."/>
            <person name="Jimenez J."/>
            <person name="Sanchez M."/>
            <person name="del Rey F."/>
            <person name="Benito J."/>
            <person name="Dominguez A."/>
            <person name="Revuelta J.L."/>
            <person name="Moreno S."/>
            <person name="Armstrong J."/>
            <person name="Forsburg S.L."/>
            <person name="Cerutti L."/>
            <person name="Lowe T."/>
            <person name="McCombie W.R."/>
            <person name="Paulsen I."/>
            <person name="Potashkin J."/>
            <person name="Shpakovski G.V."/>
            <person name="Ussery D."/>
            <person name="Barrell B.G."/>
            <person name="Nurse P."/>
        </authorList>
    </citation>
    <scope>NUCLEOTIDE SEQUENCE [LARGE SCALE GENOMIC DNA]</scope>
    <source>
        <strain>972 / ATCC 24843</strain>
    </source>
</reference>
<reference key="2">
    <citation type="journal article" date="1997" name="DNA Res.">
        <title>Identification of open reading frames in Schizosaccharomyces pombe cDNAs.</title>
        <authorList>
            <person name="Yoshioka S."/>
            <person name="Kato K."/>
            <person name="Nakai K."/>
            <person name="Okayama H."/>
            <person name="Nojima H."/>
        </authorList>
    </citation>
    <scope>NUCLEOTIDE SEQUENCE [LARGE SCALE MRNA]</scope>
    <source>
        <strain>PR745</strain>
    </source>
</reference>
<reference key="3">
    <citation type="journal article" date="2006" name="Nat. Biotechnol.">
        <title>ORFeome cloning and global analysis of protein localization in the fission yeast Schizosaccharomyces pombe.</title>
        <authorList>
            <person name="Matsuyama A."/>
            <person name="Arai R."/>
            <person name="Yashiroda Y."/>
            <person name="Shirai A."/>
            <person name="Kamata A."/>
            <person name="Sekido S."/>
            <person name="Kobayashi Y."/>
            <person name="Hashimoto A."/>
            <person name="Hamamoto M."/>
            <person name="Hiraoka Y."/>
            <person name="Horinouchi S."/>
            <person name="Yoshida M."/>
        </authorList>
    </citation>
    <scope>SUBCELLULAR LOCATION [LARGE SCALE ANALYSIS]</scope>
</reference>
<feature type="transit peptide" description="Mitochondrion" evidence="2">
    <location>
        <begin position="1"/>
        <end position="73"/>
    </location>
</feature>
<feature type="chain" id="PRO_0000116675" description="LETM1 domain-containing protein mdm28, mitochondrial">
    <location>
        <begin position="74"/>
        <end position="473"/>
    </location>
</feature>
<feature type="topological domain" description="Mitochondrial intermembrane" evidence="1">
    <location>
        <begin position="74"/>
        <end position="161"/>
    </location>
</feature>
<feature type="transmembrane region" description="Helical" evidence="2">
    <location>
        <begin position="162"/>
        <end position="182"/>
    </location>
</feature>
<feature type="topological domain" description="Mitochondrial matrix" evidence="1">
    <location>
        <begin position="183"/>
        <end position="473"/>
    </location>
</feature>
<feature type="domain" description="Letm1 RBD" evidence="3">
    <location>
        <begin position="205"/>
        <end position="398"/>
    </location>
</feature>
<feature type="region of interest" description="Disordered" evidence="4">
    <location>
        <begin position="430"/>
        <end position="473"/>
    </location>
</feature>
<feature type="compositionally biased region" description="Basic and acidic residues" evidence="4">
    <location>
        <begin position="434"/>
        <end position="452"/>
    </location>
</feature>
<feature type="compositionally biased region" description="Polar residues" evidence="4">
    <location>
        <begin position="462"/>
        <end position="473"/>
    </location>
</feature>
<feature type="sequence conflict" description="In Ref. 2; BAA13779." evidence="6" ref="2">
    <original>K</original>
    <variation>I</variation>
    <location>
        <position position="122"/>
    </location>
</feature>
<feature type="sequence conflict" description="In Ref. 2; BAA13779." evidence="6" ref="2">
    <original>V</original>
    <variation>G</variation>
    <location>
        <position position="279"/>
    </location>
</feature>
<feature type="sequence conflict" description="In Ref. 2; BAA13779." evidence="6" ref="2">
    <original>D</original>
    <variation>H</variation>
    <location>
        <position position="311"/>
    </location>
</feature>
<feature type="sequence conflict" description="In Ref. 2; BAA13779." evidence="6" ref="2">
    <original>S</original>
    <variation>P</variation>
    <location>
        <position position="370"/>
    </location>
</feature>
<name>MDM28_SCHPO</name>
<accession>O13920</accession>
<accession>A0AAN2HAA0</accession>
<accession>P78769</accession>
<dbReference type="EMBL" id="CU329670">
    <property type="protein sequence ID" value="CAK9837883.1"/>
    <property type="molecule type" value="Genomic_DNA"/>
</dbReference>
<dbReference type="EMBL" id="D89117">
    <property type="protein sequence ID" value="BAA13779.1"/>
    <property type="molecule type" value="mRNA"/>
</dbReference>
<dbReference type="PIR" id="T38255">
    <property type="entry name" value="T38255"/>
</dbReference>
<dbReference type="PIR" id="T42226">
    <property type="entry name" value="T42226"/>
</dbReference>
<dbReference type="RefSeq" id="NP_593648.1">
    <property type="nucleotide sequence ID" value="NM_001019079.2"/>
</dbReference>
<dbReference type="SMR" id="O13920"/>
<dbReference type="BioGRID" id="278439">
    <property type="interactions" value="1"/>
</dbReference>
<dbReference type="FunCoup" id="O13920">
    <property type="interactions" value="372"/>
</dbReference>
<dbReference type="STRING" id="284812.O13920"/>
<dbReference type="PaxDb" id="4896-SPAC23C11.17.1"/>
<dbReference type="EnsemblFungi" id="SPAC23C11.17.1">
    <property type="protein sequence ID" value="SPAC23C11.17.1:pep"/>
    <property type="gene ID" value="SPAC23C11.17"/>
</dbReference>
<dbReference type="GeneID" id="2541952"/>
<dbReference type="KEGG" id="spo:2541952"/>
<dbReference type="PomBase" id="SPAC23C11.17">
    <property type="gene designation" value="mdm28"/>
</dbReference>
<dbReference type="VEuPathDB" id="FungiDB:SPAC23C11.17"/>
<dbReference type="eggNOG" id="KOG1043">
    <property type="taxonomic scope" value="Eukaryota"/>
</dbReference>
<dbReference type="HOGENOM" id="CLU_008958_5_2_1"/>
<dbReference type="InParanoid" id="O13920"/>
<dbReference type="OMA" id="LQHYWDG"/>
<dbReference type="PhylomeDB" id="O13920"/>
<dbReference type="PRO" id="PR:O13920"/>
<dbReference type="Proteomes" id="UP000002485">
    <property type="component" value="Chromosome I"/>
</dbReference>
<dbReference type="GO" id="GO:0099617">
    <property type="term" value="C:matrix side of mitochondrial inner membrane"/>
    <property type="evidence" value="ECO:0000305"/>
    <property type="project" value="PomBase"/>
</dbReference>
<dbReference type="GO" id="GO:0005743">
    <property type="term" value="C:mitochondrial inner membrane"/>
    <property type="evidence" value="ECO:0007669"/>
    <property type="project" value="UniProtKB-KW"/>
</dbReference>
<dbReference type="GO" id="GO:0005739">
    <property type="term" value="C:mitochondrion"/>
    <property type="evidence" value="ECO:0007005"/>
    <property type="project" value="PomBase"/>
</dbReference>
<dbReference type="GO" id="GO:0043022">
    <property type="term" value="F:ribosome binding"/>
    <property type="evidence" value="ECO:0007669"/>
    <property type="project" value="InterPro"/>
</dbReference>
<dbReference type="GO" id="GO:0032543">
    <property type="term" value="P:mitochondrial translation"/>
    <property type="evidence" value="ECO:0000266"/>
    <property type="project" value="PomBase"/>
</dbReference>
<dbReference type="InterPro" id="IPR033122">
    <property type="entry name" value="LETM1-like_RBD"/>
</dbReference>
<dbReference type="InterPro" id="IPR044202">
    <property type="entry name" value="LETM1/MDM38-like"/>
</dbReference>
<dbReference type="PANTHER" id="PTHR14009">
    <property type="entry name" value="LEUCINE ZIPPER-EF-HAND CONTAINING TRANSMEMBRANE PROTEIN"/>
    <property type="match status" value="1"/>
</dbReference>
<dbReference type="PANTHER" id="PTHR14009:SF1">
    <property type="entry name" value="MITOCHONDRIAL PROTON_CALCIUM EXCHANGER PROTEIN"/>
    <property type="match status" value="1"/>
</dbReference>
<dbReference type="Pfam" id="PF07766">
    <property type="entry name" value="LETM1_RBD"/>
    <property type="match status" value="1"/>
</dbReference>
<dbReference type="PROSITE" id="PS51758">
    <property type="entry name" value="LETM1_RBD"/>
    <property type="match status" value="1"/>
</dbReference>
<organism>
    <name type="scientific">Schizosaccharomyces pombe (strain 972 / ATCC 24843)</name>
    <name type="common">Fission yeast</name>
    <dbReference type="NCBI Taxonomy" id="284812"/>
    <lineage>
        <taxon>Eukaryota</taxon>
        <taxon>Fungi</taxon>
        <taxon>Dikarya</taxon>
        <taxon>Ascomycota</taxon>
        <taxon>Taphrinomycotina</taxon>
        <taxon>Schizosaccharomycetes</taxon>
        <taxon>Schizosaccharomycetales</taxon>
        <taxon>Schizosaccharomycetaceae</taxon>
        <taxon>Schizosaccharomyces</taxon>
    </lineage>
</organism>
<evidence type="ECO:0000250" key="1"/>
<evidence type="ECO:0000255" key="2"/>
<evidence type="ECO:0000255" key="3">
    <source>
        <dbReference type="PROSITE-ProRule" id="PRU01094"/>
    </source>
</evidence>
<evidence type="ECO:0000256" key="4">
    <source>
        <dbReference type="SAM" id="MobiDB-lite"/>
    </source>
</evidence>
<evidence type="ECO:0000269" key="5">
    <source>
    </source>
</evidence>
<evidence type="ECO:0000305" key="6"/>
<evidence type="ECO:0000312" key="7">
    <source>
        <dbReference type="PomBase" id="SPAC23C11.17"/>
    </source>
</evidence>
<keyword id="KW-0472">Membrane</keyword>
<keyword id="KW-0496">Mitochondrion</keyword>
<keyword id="KW-0999">Mitochondrion inner membrane</keyword>
<keyword id="KW-1185">Reference proteome</keyword>
<keyword id="KW-0809">Transit peptide</keyword>
<keyword id="KW-0812">Transmembrane</keyword>
<keyword id="KW-1133">Transmembrane helix</keyword>
<comment type="function">
    <text evidence="1">Involved in mitochondrial potassium homeostasis through the mitochondrial K(+)/H(+) exchange regulation.</text>
</comment>
<comment type="subcellular location">
    <subcellularLocation>
        <location evidence="5">Mitochondrion inner membrane</location>
        <topology evidence="5">Single-pass membrane protein</topology>
    </subcellularLocation>
</comment>
<gene>
    <name type="primary">mdm28</name>
    <name evidence="7" type="ORF">SPAC23C11.17</name>
</gene>